<evidence type="ECO:0000250" key="1"/>
<evidence type="ECO:0000255" key="2"/>
<evidence type="ECO:0000305" key="3"/>
<name>EBRB_BACLD</name>
<gene>
    <name type="primary">ebrB</name>
    <name type="ordered locus">BLi01958</name>
    <name type="ordered locus">BL00457</name>
</gene>
<organism>
    <name type="scientific">Bacillus licheniformis (strain ATCC 14580 / DSM 13 / JCM 2505 / CCUG 7422 / NBRC 12200 / NCIMB 9375 / NCTC 10341 / NRRL NRS-1264 / Gibson 46)</name>
    <dbReference type="NCBI Taxonomy" id="279010"/>
    <lineage>
        <taxon>Bacteria</taxon>
        <taxon>Bacillati</taxon>
        <taxon>Bacillota</taxon>
        <taxon>Bacilli</taxon>
        <taxon>Bacillales</taxon>
        <taxon>Bacillaceae</taxon>
        <taxon>Bacillus</taxon>
    </lineage>
</organism>
<accession>Q65JB2</accession>
<protein>
    <recommendedName>
        <fullName>Multidrug resistance protein EbrB</fullName>
    </recommendedName>
</protein>
<sequence>MKGMIFLAAAILSEVFGSTMLKLSEGFSAPLPAAGVIIGFAASFTFLSFSLKTLPLSAAYATWAGTGTALTAAIGHFIFQEPFNLKTLIGLTLIIGGVFLLNSKRTEAADQKAQLTIEI</sequence>
<proteinExistence type="inferred from homology"/>
<dbReference type="EMBL" id="AE017333">
    <property type="protein sequence ID" value="AAU40852.1"/>
    <property type="molecule type" value="Genomic_DNA"/>
</dbReference>
<dbReference type="EMBL" id="CP000002">
    <property type="protein sequence ID" value="AAU23489.1"/>
    <property type="molecule type" value="Genomic_DNA"/>
</dbReference>
<dbReference type="RefSeq" id="WP_003182037.1">
    <property type="nucleotide sequence ID" value="NC_006322.1"/>
</dbReference>
<dbReference type="SMR" id="Q65JB2"/>
<dbReference type="STRING" id="279010.BL00457"/>
<dbReference type="KEGG" id="bld:BLi01958"/>
<dbReference type="KEGG" id="bli:BL00457"/>
<dbReference type="eggNOG" id="COG2076">
    <property type="taxonomic scope" value="Bacteria"/>
</dbReference>
<dbReference type="HOGENOM" id="CLU_133067_0_2_9"/>
<dbReference type="Proteomes" id="UP000000606">
    <property type="component" value="Chromosome"/>
</dbReference>
<dbReference type="GO" id="GO:0005886">
    <property type="term" value="C:plasma membrane"/>
    <property type="evidence" value="ECO:0007669"/>
    <property type="project" value="UniProtKB-SubCell"/>
</dbReference>
<dbReference type="GO" id="GO:0022857">
    <property type="term" value="F:transmembrane transporter activity"/>
    <property type="evidence" value="ECO:0007669"/>
    <property type="project" value="InterPro"/>
</dbReference>
<dbReference type="FunFam" id="1.10.3730.20:FF:000001">
    <property type="entry name" value="Quaternary ammonium compound resistance transporter SugE"/>
    <property type="match status" value="1"/>
</dbReference>
<dbReference type="Gene3D" id="1.10.3730.20">
    <property type="match status" value="1"/>
</dbReference>
<dbReference type="InterPro" id="IPR000390">
    <property type="entry name" value="Small_drug/metabolite_transptr"/>
</dbReference>
<dbReference type="InterPro" id="IPR045324">
    <property type="entry name" value="Small_multidrug_res"/>
</dbReference>
<dbReference type="PANTHER" id="PTHR30561:SF1">
    <property type="entry name" value="MULTIDRUG TRANSPORTER EMRE"/>
    <property type="match status" value="1"/>
</dbReference>
<dbReference type="PANTHER" id="PTHR30561">
    <property type="entry name" value="SMR FAMILY PROTON-DEPENDENT DRUG EFFLUX TRANSPORTER SUGE"/>
    <property type="match status" value="1"/>
</dbReference>
<dbReference type="Pfam" id="PF00893">
    <property type="entry name" value="Multi_Drug_Res"/>
    <property type="match status" value="1"/>
</dbReference>
<dbReference type="SUPFAM" id="SSF103481">
    <property type="entry name" value="Multidrug resistance efflux transporter EmrE"/>
    <property type="match status" value="1"/>
</dbReference>
<feature type="chain" id="PRO_0000108092" description="Multidrug resistance protein EbrB">
    <location>
        <begin position="1"/>
        <end position="119"/>
    </location>
</feature>
<feature type="transmembrane region" description="Helical" evidence="2">
    <location>
        <begin position="3"/>
        <end position="23"/>
    </location>
</feature>
<feature type="transmembrane region" description="Helical" evidence="2">
    <location>
        <begin position="31"/>
        <end position="51"/>
    </location>
</feature>
<feature type="transmembrane region" description="Helical" evidence="2">
    <location>
        <begin position="59"/>
        <end position="79"/>
    </location>
</feature>
<feature type="transmembrane region" description="Helical" evidence="2">
    <location>
        <begin position="81"/>
        <end position="101"/>
    </location>
</feature>
<keyword id="KW-1003">Cell membrane</keyword>
<keyword id="KW-0472">Membrane</keyword>
<keyword id="KW-1185">Reference proteome</keyword>
<keyword id="KW-0812">Transmembrane</keyword>
<keyword id="KW-1133">Transmembrane helix</keyword>
<keyword id="KW-0813">Transport</keyword>
<reference key="1">
    <citation type="journal article" date="2004" name="J. Mol. Microbiol. Biotechnol.">
        <title>The complete genome sequence of Bacillus licheniformis DSM13, an organism with great industrial potential.</title>
        <authorList>
            <person name="Veith B."/>
            <person name="Herzberg C."/>
            <person name="Steckel S."/>
            <person name="Feesche J."/>
            <person name="Maurer K.H."/>
            <person name="Ehrenreich P."/>
            <person name="Baeumer S."/>
            <person name="Henne A."/>
            <person name="Liesegang H."/>
            <person name="Merkl R."/>
            <person name="Ehrenreich A."/>
            <person name="Gottschalk G."/>
        </authorList>
    </citation>
    <scope>NUCLEOTIDE SEQUENCE [LARGE SCALE GENOMIC DNA]</scope>
    <source>
        <strain>ATCC 14580 / DSM 13 / JCM 2505 / CCUG 7422 / NBRC 12200 / NCIMB 9375 / NCTC 10341 / NRRL NRS-1264 / Gibson 46</strain>
    </source>
</reference>
<reference key="2">
    <citation type="journal article" date="2004" name="Genome Biol.">
        <title>Complete genome sequence of the industrial bacterium Bacillus licheniformis and comparisons with closely related Bacillus species.</title>
        <authorList>
            <person name="Rey M.W."/>
            <person name="Ramaiya P."/>
            <person name="Nelson B.A."/>
            <person name="Brody-Karpin S.D."/>
            <person name="Zaretsky E.J."/>
            <person name="Tang M."/>
            <person name="Lopez de Leon A."/>
            <person name="Xiang H."/>
            <person name="Gusti V."/>
            <person name="Clausen I.G."/>
            <person name="Olsen P.B."/>
            <person name="Rasmussen M.D."/>
            <person name="Andersen J.T."/>
            <person name="Joergensen P.L."/>
            <person name="Larsen T.S."/>
            <person name="Sorokin A."/>
            <person name="Bolotin A."/>
            <person name="Lapidus A."/>
            <person name="Galleron N."/>
            <person name="Ehrlich S.D."/>
            <person name="Berka R.M."/>
        </authorList>
    </citation>
    <scope>NUCLEOTIDE SEQUENCE [LARGE SCALE GENOMIC DNA]</scope>
    <source>
        <strain>ATCC 14580 / DSM 13 / JCM 2505 / CCUG 7422 / NBRC 12200 / NCIMB 9375 / NCTC 10341 / NRRL NRS-1264 / Gibson 46</strain>
    </source>
</reference>
<comment type="function">
    <text evidence="1">Part of a multidrug efflux pump. Confers resistance to cationic lipophilic dyes such as ethidium bromide, acriflavine, pyronine Y and safranin O. The efflux is probably coupled to an influx of protons (By similarity).</text>
</comment>
<comment type="subunit">
    <text evidence="1">The efflux pump is composed of EbrA and EbrB.</text>
</comment>
<comment type="subcellular location">
    <subcellularLocation>
        <location evidence="3">Cell membrane</location>
        <topology evidence="3">Multi-pass membrane protein</topology>
    </subcellularLocation>
</comment>
<comment type="similarity">
    <text evidence="3">Belongs to the drug/metabolite transporter (DMT) superfamily. Small multidrug resistance (SMR) (TC 2.A.7.1) family. EbrA/EbrB subfamily.</text>
</comment>